<reference key="1">
    <citation type="journal article" date="2008" name="Biochem. J.">
        <title>Cyto-insectotoxins, a novel class of cytolytic and insecticidal peptides from spider venom.</title>
        <authorList>
            <person name="Vassilevski A.A."/>
            <person name="Kozlov S.A."/>
            <person name="Samsonova O.V."/>
            <person name="Egorova N.S."/>
            <person name="Karpunin D.V."/>
            <person name="Pluzhnikov K.A."/>
            <person name="Feofanov A.V."/>
            <person name="Grishin E.V."/>
        </authorList>
    </citation>
    <scope>NUCLEOTIDE SEQUENCE [MRNA]</scope>
    <source>
        <tissue>Venom gland</tissue>
    </source>
</reference>
<sequence>MKYFVVALALVAAFACIAESKPAESEHELAEVEEENELADLEDAVWLEHLADLSDLEEARGFFGNTWKKIKGKTDKIMLKKAVKIMVKKEGISKEEAQAKVDAMSKKQIRLYLLKHYGKKALQKASEKL</sequence>
<comment type="function">
    <text evidence="1">Insecticidal, cytolytic and antimicrobial peptide. Forms voltage-dependent, ion-permeable channels in membranes. At high concentration causes cell membrane lysis (By similarity).</text>
</comment>
<comment type="subcellular location">
    <subcellularLocation>
        <location evidence="1">Secreted</location>
    </subcellularLocation>
</comment>
<comment type="tissue specificity">
    <text>Expressed by the venom gland.</text>
</comment>
<comment type="similarity">
    <text evidence="3">Belongs to the cationic peptide 06 (cytoinsectotoxin) family.</text>
</comment>
<dbReference type="SMR" id="P0CAZ3"/>
<dbReference type="ArachnoServer" id="AS000764">
    <property type="toxin name" value="M-zodatoxin-Lt8j"/>
</dbReference>
<dbReference type="GO" id="GO:0005576">
    <property type="term" value="C:extracellular region"/>
    <property type="evidence" value="ECO:0007669"/>
    <property type="project" value="UniProtKB-SubCell"/>
</dbReference>
<dbReference type="GO" id="GO:0090729">
    <property type="term" value="F:toxin activity"/>
    <property type="evidence" value="ECO:0007669"/>
    <property type="project" value="UniProtKB-KW"/>
</dbReference>
<dbReference type="GO" id="GO:0042742">
    <property type="term" value="P:defense response to bacterium"/>
    <property type="evidence" value="ECO:0007669"/>
    <property type="project" value="UniProtKB-KW"/>
</dbReference>
<dbReference type="GO" id="GO:0031640">
    <property type="term" value="P:killing of cells of another organism"/>
    <property type="evidence" value="ECO:0007669"/>
    <property type="project" value="UniProtKB-KW"/>
</dbReference>
<dbReference type="InterPro" id="IPR018802">
    <property type="entry name" value="Latarcin_precursor"/>
</dbReference>
<dbReference type="Pfam" id="PF10279">
    <property type="entry name" value="Latarcin"/>
    <property type="match status" value="1"/>
</dbReference>
<gene>
    <name type="primary">cit 1-9</name>
</gene>
<proteinExistence type="evidence at transcript level"/>
<name>CTX19_LACTA</name>
<keyword id="KW-0044">Antibiotic</keyword>
<keyword id="KW-0929">Antimicrobial</keyword>
<keyword id="KW-0204">Cytolysis</keyword>
<keyword id="KW-0354">Hemolysis</keyword>
<keyword id="KW-0964">Secreted</keyword>
<keyword id="KW-0732">Signal</keyword>
<keyword id="KW-0800">Toxin</keyword>
<organism>
    <name type="scientific">Lachesana tarabaevi</name>
    <name type="common">Spider</name>
    <dbReference type="NCBI Taxonomy" id="379576"/>
    <lineage>
        <taxon>Eukaryota</taxon>
        <taxon>Metazoa</taxon>
        <taxon>Ecdysozoa</taxon>
        <taxon>Arthropoda</taxon>
        <taxon>Chelicerata</taxon>
        <taxon>Arachnida</taxon>
        <taxon>Araneae</taxon>
        <taxon>Araneomorphae</taxon>
        <taxon>Entelegynae</taxon>
        <taxon>Entelegynae incertae sedis</taxon>
        <taxon>Zodariidae</taxon>
        <taxon>Lachesana</taxon>
    </lineage>
</organism>
<protein>
    <recommendedName>
        <fullName>M-zodatoxin-Lt8j</fullName>
        <shortName>M-ZDTX-Lt8j</shortName>
    </recommendedName>
    <alternativeName>
        <fullName>Cytoinsectotoxin 1-9</fullName>
    </alternativeName>
</protein>
<evidence type="ECO:0000250" key="1"/>
<evidence type="ECO:0000255" key="2"/>
<evidence type="ECO:0000305" key="3"/>
<accession>P0CAZ3</accession>
<feature type="signal peptide" evidence="2">
    <location>
        <begin position="1"/>
        <end position="20"/>
    </location>
</feature>
<feature type="propeptide" id="PRO_0000380139" evidence="1">
    <location>
        <begin position="21"/>
        <end position="60"/>
    </location>
</feature>
<feature type="chain" id="PRO_0000380140" description="M-zodatoxin-Lt8j">
    <location>
        <begin position="61"/>
        <end position="129"/>
    </location>
</feature>